<reference key="1">
    <citation type="journal article" date="2005" name="Proc. Natl. Acad. Sci. U.S.A.">
        <title>The psychrophilic lifestyle as revealed by the genome sequence of Colwellia psychrerythraea 34H through genomic and proteomic analyses.</title>
        <authorList>
            <person name="Methe B.A."/>
            <person name="Nelson K.E."/>
            <person name="Deming J.W."/>
            <person name="Momen B."/>
            <person name="Melamud E."/>
            <person name="Zhang X."/>
            <person name="Moult J."/>
            <person name="Madupu R."/>
            <person name="Nelson W.C."/>
            <person name="Dodson R.J."/>
            <person name="Brinkac L.M."/>
            <person name="Daugherty S.C."/>
            <person name="Durkin A.S."/>
            <person name="DeBoy R.T."/>
            <person name="Kolonay J.F."/>
            <person name="Sullivan S.A."/>
            <person name="Zhou L."/>
            <person name="Davidsen T.M."/>
            <person name="Wu M."/>
            <person name="Huston A.L."/>
            <person name="Lewis M."/>
            <person name="Weaver B."/>
            <person name="Weidman J.F."/>
            <person name="Khouri H."/>
            <person name="Utterback T.R."/>
            <person name="Feldblyum T.V."/>
            <person name="Fraser C.M."/>
        </authorList>
    </citation>
    <scope>NUCLEOTIDE SEQUENCE [LARGE SCALE GENOMIC DNA]</scope>
    <source>
        <strain>34H / ATCC BAA-681</strain>
    </source>
</reference>
<feature type="chain" id="PRO_0000227614" description="Undecaprenyl-diphosphatase">
    <location>
        <begin position="1"/>
        <end position="272"/>
    </location>
</feature>
<feature type="transmembrane region" description="Helical" evidence="1">
    <location>
        <begin position="1"/>
        <end position="21"/>
    </location>
</feature>
<feature type="transmembrane region" description="Helical" evidence="1">
    <location>
        <begin position="39"/>
        <end position="59"/>
    </location>
</feature>
<feature type="transmembrane region" description="Helical" evidence="1">
    <location>
        <begin position="91"/>
        <end position="111"/>
    </location>
</feature>
<feature type="transmembrane region" description="Helical" evidence="1">
    <location>
        <begin position="117"/>
        <end position="137"/>
    </location>
</feature>
<feature type="transmembrane region" description="Helical" evidence="1">
    <location>
        <begin position="151"/>
        <end position="171"/>
    </location>
</feature>
<feature type="transmembrane region" description="Helical" evidence="1">
    <location>
        <begin position="196"/>
        <end position="216"/>
    </location>
</feature>
<feature type="transmembrane region" description="Helical" evidence="1">
    <location>
        <begin position="228"/>
        <end position="248"/>
    </location>
</feature>
<feature type="transmembrane region" description="Helical" evidence="1">
    <location>
        <begin position="251"/>
        <end position="271"/>
    </location>
</feature>
<protein>
    <recommendedName>
        <fullName evidence="1">Undecaprenyl-diphosphatase</fullName>
        <ecNumber evidence="1">3.6.1.27</ecNumber>
    </recommendedName>
    <alternativeName>
        <fullName evidence="1">Bacitracin resistance protein</fullName>
    </alternativeName>
    <alternativeName>
        <fullName evidence="1">Undecaprenyl pyrophosphate phosphatase</fullName>
    </alternativeName>
</protein>
<accession>Q47W31</accession>
<keyword id="KW-0046">Antibiotic resistance</keyword>
<keyword id="KW-0997">Cell inner membrane</keyword>
<keyword id="KW-1003">Cell membrane</keyword>
<keyword id="KW-0133">Cell shape</keyword>
<keyword id="KW-0961">Cell wall biogenesis/degradation</keyword>
<keyword id="KW-0378">Hydrolase</keyword>
<keyword id="KW-0472">Membrane</keyword>
<keyword id="KW-0573">Peptidoglycan synthesis</keyword>
<keyword id="KW-0812">Transmembrane</keyword>
<keyword id="KW-1133">Transmembrane helix</keyword>
<organism>
    <name type="scientific">Colwellia psychrerythraea (strain 34H / ATCC BAA-681)</name>
    <name type="common">Vibrio psychroerythus</name>
    <dbReference type="NCBI Taxonomy" id="167879"/>
    <lineage>
        <taxon>Bacteria</taxon>
        <taxon>Pseudomonadati</taxon>
        <taxon>Pseudomonadota</taxon>
        <taxon>Gammaproteobacteria</taxon>
        <taxon>Alteromonadales</taxon>
        <taxon>Colwelliaceae</taxon>
        <taxon>Colwellia</taxon>
    </lineage>
</organism>
<gene>
    <name evidence="1" type="primary">uppP</name>
    <name type="ordered locus">CPS_4342</name>
</gene>
<comment type="function">
    <text evidence="1">Catalyzes the dephosphorylation of undecaprenyl diphosphate (UPP). Confers resistance to bacitracin.</text>
</comment>
<comment type="catalytic activity">
    <reaction evidence="1">
        <text>di-trans,octa-cis-undecaprenyl diphosphate + H2O = di-trans,octa-cis-undecaprenyl phosphate + phosphate + H(+)</text>
        <dbReference type="Rhea" id="RHEA:28094"/>
        <dbReference type="ChEBI" id="CHEBI:15377"/>
        <dbReference type="ChEBI" id="CHEBI:15378"/>
        <dbReference type="ChEBI" id="CHEBI:43474"/>
        <dbReference type="ChEBI" id="CHEBI:58405"/>
        <dbReference type="ChEBI" id="CHEBI:60392"/>
        <dbReference type="EC" id="3.6.1.27"/>
    </reaction>
</comment>
<comment type="subcellular location">
    <subcellularLocation>
        <location evidence="1">Cell inner membrane</location>
        <topology evidence="1">Multi-pass membrane protein</topology>
    </subcellularLocation>
</comment>
<comment type="miscellaneous">
    <text>Bacitracin is thought to be involved in the inhibition of peptidoglycan synthesis by sequestering undecaprenyl diphosphate, thereby reducing the pool of lipid carrier available.</text>
</comment>
<comment type="similarity">
    <text evidence="1">Belongs to the UppP family.</text>
</comment>
<dbReference type="EC" id="3.6.1.27" evidence="1"/>
<dbReference type="EMBL" id="CP000083">
    <property type="protein sequence ID" value="AAZ28219.1"/>
    <property type="molecule type" value="Genomic_DNA"/>
</dbReference>
<dbReference type="RefSeq" id="WP_011045072.1">
    <property type="nucleotide sequence ID" value="NC_003910.7"/>
</dbReference>
<dbReference type="SMR" id="Q47W31"/>
<dbReference type="STRING" id="167879.CPS_4342"/>
<dbReference type="KEGG" id="cps:CPS_4342"/>
<dbReference type="eggNOG" id="COG1968">
    <property type="taxonomic scope" value="Bacteria"/>
</dbReference>
<dbReference type="HOGENOM" id="CLU_060296_1_0_6"/>
<dbReference type="Proteomes" id="UP000000547">
    <property type="component" value="Chromosome"/>
</dbReference>
<dbReference type="GO" id="GO:0005886">
    <property type="term" value="C:plasma membrane"/>
    <property type="evidence" value="ECO:0007669"/>
    <property type="project" value="UniProtKB-SubCell"/>
</dbReference>
<dbReference type="GO" id="GO:0050380">
    <property type="term" value="F:undecaprenyl-diphosphatase activity"/>
    <property type="evidence" value="ECO:0007669"/>
    <property type="project" value="UniProtKB-UniRule"/>
</dbReference>
<dbReference type="GO" id="GO:0071555">
    <property type="term" value="P:cell wall organization"/>
    <property type="evidence" value="ECO:0007669"/>
    <property type="project" value="UniProtKB-KW"/>
</dbReference>
<dbReference type="GO" id="GO:0009252">
    <property type="term" value="P:peptidoglycan biosynthetic process"/>
    <property type="evidence" value="ECO:0007669"/>
    <property type="project" value="UniProtKB-KW"/>
</dbReference>
<dbReference type="GO" id="GO:0008360">
    <property type="term" value="P:regulation of cell shape"/>
    <property type="evidence" value="ECO:0007669"/>
    <property type="project" value="UniProtKB-KW"/>
</dbReference>
<dbReference type="GO" id="GO:0046677">
    <property type="term" value="P:response to antibiotic"/>
    <property type="evidence" value="ECO:0007669"/>
    <property type="project" value="UniProtKB-UniRule"/>
</dbReference>
<dbReference type="HAMAP" id="MF_01006">
    <property type="entry name" value="Undec_diphosphatase"/>
    <property type="match status" value="1"/>
</dbReference>
<dbReference type="InterPro" id="IPR003824">
    <property type="entry name" value="UppP"/>
</dbReference>
<dbReference type="NCBIfam" id="NF001393">
    <property type="entry name" value="PRK00281.2-4"/>
    <property type="match status" value="1"/>
</dbReference>
<dbReference type="NCBIfam" id="TIGR00753">
    <property type="entry name" value="undec_PP_bacA"/>
    <property type="match status" value="1"/>
</dbReference>
<dbReference type="PANTHER" id="PTHR30622">
    <property type="entry name" value="UNDECAPRENYL-DIPHOSPHATASE"/>
    <property type="match status" value="1"/>
</dbReference>
<dbReference type="PANTHER" id="PTHR30622:SF4">
    <property type="entry name" value="UNDECAPRENYL-DIPHOSPHATASE"/>
    <property type="match status" value="1"/>
</dbReference>
<dbReference type="Pfam" id="PF02673">
    <property type="entry name" value="BacA"/>
    <property type="match status" value="1"/>
</dbReference>
<evidence type="ECO:0000255" key="1">
    <source>
        <dbReference type="HAMAP-Rule" id="MF_01006"/>
    </source>
</evidence>
<name>UPPP_COLP3</name>
<sequence length="272" mass="29374">MSTLEIIILALLQGLTEFLPISSSAHLILPSQVLGWQDQGLAFDVAVHVGTLLAVMMYFRKELGVMAVAWLGTVGVGPEKGRGGFDAKLSWWILLATIPAGLFGLLGKDFIEEHLRSALVIAMTTLLFGFLLGFADIKAGKRTEHKPMEKLGLKGAMLIGLAQAVALIPGTSRSGITMTIGLMLGLSRDNAARFSFLLSIPAIAMAGSYLTLKLILSTESVDWFAMGLGSLLAFVSAYACIHYFLILLEKLGMMPFVIYRLILGVGLLWFIL</sequence>
<proteinExistence type="inferred from homology"/>